<gene>
    <name evidence="1" type="primary">luxS</name>
    <name type="ordered locus">EFER_0382</name>
</gene>
<dbReference type="EC" id="4.4.1.21" evidence="1"/>
<dbReference type="EMBL" id="CU928158">
    <property type="protein sequence ID" value="CAQ87943.1"/>
    <property type="molecule type" value="Genomic_DNA"/>
</dbReference>
<dbReference type="RefSeq" id="WP_001130211.1">
    <property type="nucleotide sequence ID" value="NC_011740.1"/>
</dbReference>
<dbReference type="SMR" id="B7LVZ2"/>
<dbReference type="GeneID" id="93779324"/>
<dbReference type="KEGG" id="efe:EFER_0382"/>
<dbReference type="HOGENOM" id="CLU_107531_2_0_6"/>
<dbReference type="OrthoDB" id="9788129at2"/>
<dbReference type="Proteomes" id="UP000000745">
    <property type="component" value="Chromosome"/>
</dbReference>
<dbReference type="GO" id="GO:0005506">
    <property type="term" value="F:iron ion binding"/>
    <property type="evidence" value="ECO:0007669"/>
    <property type="project" value="InterPro"/>
</dbReference>
<dbReference type="GO" id="GO:0043768">
    <property type="term" value="F:S-ribosylhomocysteine lyase activity"/>
    <property type="evidence" value="ECO:0007669"/>
    <property type="project" value="UniProtKB-UniRule"/>
</dbReference>
<dbReference type="GO" id="GO:0009372">
    <property type="term" value="P:quorum sensing"/>
    <property type="evidence" value="ECO:0007669"/>
    <property type="project" value="UniProtKB-UniRule"/>
</dbReference>
<dbReference type="FunFam" id="3.30.1360.80:FF:000001">
    <property type="entry name" value="S-ribosylhomocysteine lyase"/>
    <property type="match status" value="1"/>
</dbReference>
<dbReference type="Gene3D" id="3.30.1360.80">
    <property type="entry name" value="S-ribosylhomocysteinase (LuxS)"/>
    <property type="match status" value="1"/>
</dbReference>
<dbReference type="HAMAP" id="MF_00091">
    <property type="entry name" value="LuxS"/>
    <property type="match status" value="1"/>
</dbReference>
<dbReference type="InterPro" id="IPR037005">
    <property type="entry name" value="LuxS_sf"/>
</dbReference>
<dbReference type="InterPro" id="IPR011249">
    <property type="entry name" value="Metalloenz_LuxS/M16"/>
</dbReference>
<dbReference type="InterPro" id="IPR003815">
    <property type="entry name" value="S-ribosylhomocysteinase"/>
</dbReference>
<dbReference type="NCBIfam" id="NF002602">
    <property type="entry name" value="PRK02260.1-2"/>
    <property type="match status" value="1"/>
</dbReference>
<dbReference type="PANTHER" id="PTHR35799">
    <property type="entry name" value="S-RIBOSYLHOMOCYSTEINE LYASE"/>
    <property type="match status" value="1"/>
</dbReference>
<dbReference type="PANTHER" id="PTHR35799:SF1">
    <property type="entry name" value="S-RIBOSYLHOMOCYSTEINE LYASE"/>
    <property type="match status" value="1"/>
</dbReference>
<dbReference type="Pfam" id="PF02664">
    <property type="entry name" value="LuxS"/>
    <property type="match status" value="1"/>
</dbReference>
<dbReference type="PIRSF" id="PIRSF006160">
    <property type="entry name" value="AI2"/>
    <property type="match status" value="1"/>
</dbReference>
<dbReference type="PRINTS" id="PR01487">
    <property type="entry name" value="LUXSPROTEIN"/>
</dbReference>
<dbReference type="SUPFAM" id="SSF63411">
    <property type="entry name" value="LuxS/MPP-like metallohydrolase"/>
    <property type="match status" value="1"/>
</dbReference>
<evidence type="ECO:0000255" key="1">
    <source>
        <dbReference type="HAMAP-Rule" id="MF_00091"/>
    </source>
</evidence>
<organism>
    <name type="scientific">Escherichia fergusonii (strain ATCC 35469 / DSM 13698 / CCUG 18766 / IAM 14443 / JCM 21226 / LMG 7866 / NBRC 102419 / NCTC 12128 / CDC 0568-73)</name>
    <dbReference type="NCBI Taxonomy" id="585054"/>
    <lineage>
        <taxon>Bacteria</taxon>
        <taxon>Pseudomonadati</taxon>
        <taxon>Pseudomonadota</taxon>
        <taxon>Gammaproteobacteria</taxon>
        <taxon>Enterobacterales</taxon>
        <taxon>Enterobacteriaceae</taxon>
        <taxon>Escherichia</taxon>
    </lineage>
</organism>
<feature type="chain" id="PRO_1000117222" description="S-ribosylhomocysteine lyase">
    <location>
        <begin position="1"/>
        <end position="171"/>
    </location>
</feature>
<feature type="binding site" evidence="1">
    <location>
        <position position="54"/>
    </location>
    <ligand>
        <name>Fe cation</name>
        <dbReference type="ChEBI" id="CHEBI:24875"/>
    </ligand>
</feature>
<feature type="binding site" evidence="1">
    <location>
        <position position="58"/>
    </location>
    <ligand>
        <name>Fe cation</name>
        <dbReference type="ChEBI" id="CHEBI:24875"/>
    </ligand>
</feature>
<feature type="binding site" evidence="1">
    <location>
        <position position="128"/>
    </location>
    <ligand>
        <name>Fe cation</name>
        <dbReference type="ChEBI" id="CHEBI:24875"/>
    </ligand>
</feature>
<reference key="1">
    <citation type="journal article" date="2009" name="PLoS Genet.">
        <title>Organised genome dynamics in the Escherichia coli species results in highly diverse adaptive paths.</title>
        <authorList>
            <person name="Touchon M."/>
            <person name="Hoede C."/>
            <person name="Tenaillon O."/>
            <person name="Barbe V."/>
            <person name="Baeriswyl S."/>
            <person name="Bidet P."/>
            <person name="Bingen E."/>
            <person name="Bonacorsi S."/>
            <person name="Bouchier C."/>
            <person name="Bouvet O."/>
            <person name="Calteau A."/>
            <person name="Chiapello H."/>
            <person name="Clermont O."/>
            <person name="Cruveiller S."/>
            <person name="Danchin A."/>
            <person name="Diard M."/>
            <person name="Dossat C."/>
            <person name="Karoui M.E."/>
            <person name="Frapy E."/>
            <person name="Garry L."/>
            <person name="Ghigo J.M."/>
            <person name="Gilles A.M."/>
            <person name="Johnson J."/>
            <person name="Le Bouguenec C."/>
            <person name="Lescat M."/>
            <person name="Mangenot S."/>
            <person name="Martinez-Jehanne V."/>
            <person name="Matic I."/>
            <person name="Nassif X."/>
            <person name="Oztas S."/>
            <person name="Petit M.A."/>
            <person name="Pichon C."/>
            <person name="Rouy Z."/>
            <person name="Ruf C.S."/>
            <person name="Schneider D."/>
            <person name="Tourret J."/>
            <person name="Vacherie B."/>
            <person name="Vallenet D."/>
            <person name="Medigue C."/>
            <person name="Rocha E.P.C."/>
            <person name="Denamur E."/>
        </authorList>
    </citation>
    <scope>NUCLEOTIDE SEQUENCE [LARGE SCALE GENOMIC DNA]</scope>
    <source>
        <strain>ATCC 35469 / DSM 13698 / BCRC 15582 / CCUG 18766 / IAM 14443 / JCM 21226 / LMG 7866 / NBRC 102419 / NCTC 12128 / CDC 0568-73</strain>
    </source>
</reference>
<sequence>MPLLDSFTVDHTRMEAPAVRVAKTMNTPHGDAITVFDLRFCVPNKEVMPERGIHTLEHLFAGFMRNHLNGNGVEIIDISPMGCRTGFYMSLIGTPDEQRVADAWKAAMEDVLKVQDQNQIPELNVYQCGTYQMHSLQEAQDIARSILERDVRINSNEELALPKEKLQELHI</sequence>
<protein>
    <recommendedName>
        <fullName evidence="1">S-ribosylhomocysteine lyase</fullName>
        <ecNumber evidence="1">4.4.1.21</ecNumber>
    </recommendedName>
    <alternativeName>
        <fullName evidence="1">AI-2 synthesis protein</fullName>
    </alternativeName>
    <alternativeName>
        <fullName evidence="1">Autoinducer-2 production protein LuxS</fullName>
    </alternativeName>
</protein>
<name>LUXS_ESCF3</name>
<accession>B7LVZ2</accession>
<comment type="function">
    <text evidence="1">Involved in the synthesis of autoinducer 2 (AI-2) which is secreted by bacteria and is used to communicate both the cell density and the metabolic potential of the environment. The regulation of gene expression in response to changes in cell density is called quorum sensing. Catalyzes the transformation of S-ribosylhomocysteine (RHC) to homocysteine (HC) and 4,5-dihydroxy-2,3-pentadione (DPD).</text>
</comment>
<comment type="catalytic activity">
    <reaction evidence="1">
        <text>S-(5-deoxy-D-ribos-5-yl)-L-homocysteine = (S)-4,5-dihydroxypentane-2,3-dione + L-homocysteine</text>
        <dbReference type="Rhea" id="RHEA:17753"/>
        <dbReference type="ChEBI" id="CHEBI:29484"/>
        <dbReference type="ChEBI" id="CHEBI:58195"/>
        <dbReference type="ChEBI" id="CHEBI:58199"/>
        <dbReference type="EC" id="4.4.1.21"/>
    </reaction>
</comment>
<comment type="cofactor">
    <cofactor evidence="1">
        <name>Fe cation</name>
        <dbReference type="ChEBI" id="CHEBI:24875"/>
    </cofactor>
    <text evidence="1">Binds 1 Fe cation per subunit.</text>
</comment>
<comment type="subunit">
    <text evidence="1">Homodimer.</text>
</comment>
<comment type="similarity">
    <text evidence="1">Belongs to the LuxS family.</text>
</comment>
<proteinExistence type="inferred from homology"/>
<keyword id="KW-0071">Autoinducer synthesis</keyword>
<keyword id="KW-0408">Iron</keyword>
<keyword id="KW-0456">Lyase</keyword>
<keyword id="KW-0479">Metal-binding</keyword>
<keyword id="KW-0673">Quorum sensing</keyword>